<reference key="1">
    <citation type="journal article" date="2004" name="Nat. Genet.">
        <title>Complete sequencing and characterization of 21,243 full-length human cDNAs.</title>
        <authorList>
            <person name="Ota T."/>
            <person name="Suzuki Y."/>
            <person name="Nishikawa T."/>
            <person name="Otsuki T."/>
            <person name="Sugiyama T."/>
            <person name="Irie R."/>
            <person name="Wakamatsu A."/>
            <person name="Hayashi K."/>
            <person name="Sato H."/>
            <person name="Nagai K."/>
            <person name="Kimura K."/>
            <person name="Makita H."/>
            <person name="Sekine M."/>
            <person name="Obayashi M."/>
            <person name="Nishi T."/>
            <person name="Shibahara T."/>
            <person name="Tanaka T."/>
            <person name="Ishii S."/>
            <person name="Yamamoto J."/>
            <person name="Saito K."/>
            <person name="Kawai Y."/>
            <person name="Isono Y."/>
            <person name="Nakamura Y."/>
            <person name="Nagahari K."/>
            <person name="Murakami K."/>
            <person name="Yasuda T."/>
            <person name="Iwayanagi T."/>
            <person name="Wagatsuma M."/>
            <person name="Shiratori A."/>
            <person name="Sudo H."/>
            <person name="Hosoiri T."/>
            <person name="Kaku Y."/>
            <person name="Kodaira H."/>
            <person name="Kondo H."/>
            <person name="Sugawara M."/>
            <person name="Takahashi M."/>
            <person name="Kanda K."/>
            <person name="Yokoi T."/>
            <person name="Furuya T."/>
            <person name="Kikkawa E."/>
            <person name="Omura Y."/>
            <person name="Abe K."/>
            <person name="Kamihara K."/>
            <person name="Katsuta N."/>
            <person name="Sato K."/>
            <person name="Tanikawa M."/>
            <person name="Yamazaki M."/>
            <person name="Ninomiya K."/>
            <person name="Ishibashi T."/>
            <person name="Yamashita H."/>
            <person name="Murakawa K."/>
            <person name="Fujimori K."/>
            <person name="Tanai H."/>
            <person name="Kimata M."/>
            <person name="Watanabe M."/>
            <person name="Hiraoka S."/>
            <person name="Chiba Y."/>
            <person name="Ishida S."/>
            <person name="Ono Y."/>
            <person name="Takiguchi S."/>
            <person name="Watanabe S."/>
            <person name="Yosida M."/>
            <person name="Hotuta T."/>
            <person name="Kusano J."/>
            <person name="Kanehori K."/>
            <person name="Takahashi-Fujii A."/>
            <person name="Hara H."/>
            <person name="Tanase T.-O."/>
            <person name="Nomura Y."/>
            <person name="Togiya S."/>
            <person name="Komai F."/>
            <person name="Hara R."/>
            <person name="Takeuchi K."/>
            <person name="Arita M."/>
            <person name="Imose N."/>
            <person name="Musashino K."/>
            <person name="Yuuki H."/>
            <person name="Oshima A."/>
            <person name="Sasaki N."/>
            <person name="Aotsuka S."/>
            <person name="Yoshikawa Y."/>
            <person name="Matsunawa H."/>
            <person name="Ichihara T."/>
            <person name="Shiohata N."/>
            <person name="Sano S."/>
            <person name="Moriya S."/>
            <person name="Momiyama H."/>
            <person name="Satoh N."/>
            <person name="Takami S."/>
            <person name="Terashima Y."/>
            <person name="Suzuki O."/>
            <person name="Nakagawa S."/>
            <person name="Senoh A."/>
            <person name="Mizoguchi H."/>
            <person name="Goto Y."/>
            <person name="Shimizu F."/>
            <person name="Wakebe H."/>
            <person name="Hishigaki H."/>
            <person name="Watanabe T."/>
            <person name="Sugiyama A."/>
            <person name="Takemoto M."/>
            <person name="Kawakami B."/>
            <person name="Yamazaki M."/>
            <person name="Watanabe K."/>
            <person name="Kumagai A."/>
            <person name="Itakura S."/>
            <person name="Fukuzumi Y."/>
            <person name="Fujimori Y."/>
            <person name="Komiyama M."/>
            <person name="Tashiro H."/>
            <person name="Tanigami A."/>
            <person name="Fujiwara T."/>
            <person name="Ono T."/>
            <person name="Yamada K."/>
            <person name="Fujii Y."/>
            <person name="Ozaki K."/>
            <person name="Hirao M."/>
            <person name="Ohmori Y."/>
            <person name="Kawabata A."/>
            <person name="Hikiji T."/>
            <person name="Kobatake N."/>
            <person name="Inagaki H."/>
            <person name="Ikema Y."/>
            <person name="Okamoto S."/>
            <person name="Okitani R."/>
            <person name="Kawakami T."/>
            <person name="Noguchi S."/>
            <person name="Itoh T."/>
            <person name="Shigeta K."/>
            <person name="Senba T."/>
            <person name="Matsumura K."/>
            <person name="Nakajima Y."/>
            <person name="Mizuno T."/>
            <person name="Morinaga M."/>
            <person name="Sasaki M."/>
            <person name="Togashi T."/>
            <person name="Oyama M."/>
            <person name="Hata H."/>
            <person name="Watanabe M."/>
            <person name="Komatsu T."/>
            <person name="Mizushima-Sugano J."/>
            <person name="Satoh T."/>
            <person name="Shirai Y."/>
            <person name="Takahashi Y."/>
            <person name="Nakagawa K."/>
            <person name="Okumura K."/>
            <person name="Nagase T."/>
            <person name="Nomura N."/>
            <person name="Kikuchi H."/>
            <person name="Masuho Y."/>
            <person name="Yamashita R."/>
            <person name="Nakai K."/>
            <person name="Yada T."/>
            <person name="Nakamura Y."/>
            <person name="Ohara O."/>
            <person name="Isogai T."/>
            <person name="Sugano S."/>
        </authorList>
    </citation>
    <scope>NUCLEOTIDE SEQUENCE [LARGE SCALE MRNA] (ISOFORM 1)</scope>
    <scope>VARIANT THR-359</scope>
    <source>
        <tissue>Brain</tissue>
    </source>
</reference>
<reference key="2">
    <citation type="journal article" date="2007" name="BMC Genomics">
        <title>The full-ORF clone resource of the German cDNA consortium.</title>
        <authorList>
            <person name="Bechtel S."/>
            <person name="Rosenfelder H."/>
            <person name="Duda A."/>
            <person name="Schmidt C.P."/>
            <person name="Ernst U."/>
            <person name="Wellenreuther R."/>
            <person name="Mehrle A."/>
            <person name="Schuster C."/>
            <person name="Bahr A."/>
            <person name="Bloecker H."/>
            <person name="Heubner D."/>
            <person name="Hoerlein A."/>
            <person name="Michel G."/>
            <person name="Wedler H."/>
            <person name="Koehrer K."/>
            <person name="Ottenwaelder B."/>
            <person name="Poustka A."/>
            <person name="Wiemann S."/>
            <person name="Schupp I."/>
        </authorList>
    </citation>
    <scope>NUCLEOTIDE SEQUENCE [LARGE SCALE MRNA] (ISOFORM 1)</scope>
    <scope>VARIANT THR-359</scope>
    <source>
        <tissue>Endometrial tumor</tissue>
    </source>
</reference>
<reference key="3">
    <citation type="journal article" date="2004" name="Nature">
        <title>The DNA sequence and biology of human chromosome 19.</title>
        <authorList>
            <person name="Grimwood J."/>
            <person name="Gordon L.A."/>
            <person name="Olsen A.S."/>
            <person name="Terry A."/>
            <person name="Schmutz J."/>
            <person name="Lamerdin J.E."/>
            <person name="Hellsten U."/>
            <person name="Goodstein D."/>
            <person name="Couronne O."/>
            <person name="Tran-Gyamfi M."/>
            <person name="Aerts A."/>
            <person name="Altherr M."/>
            <person name="Ashworth L."/>
            <person name="Bajorek E."/>
            <person name="Black S."/>
            <person name="Branscomb E."/>
            <person name="Caenepeel S."/>
            <person name="Carrano A.V."/>
            <person name="Caoile C."/>
            <person name="Chan Y.M."/>
            <person name="Christensen M."/>
            <person name="Cleland C.A."/>
            <person name="Copeland A."/>
            <person name="Dalin E."/>
            <person name="Dehal P."/>
            <person name="Denys M."/>
            <person name="Detter J.C."/>
            <person name="Escobar J."/>
            <person name="Flowers D."/>
            <person name="Fotopulos D."/>
            <person name="Garcia C."/>
            <person name="Georgescu A.M."/>
            <person name="Glavina T."/>
            <person name="Gomez M."/>
            <person name="Gonzales E."/>
            <person name="Groza M."/>
            <person name="Hammon N."/>
            <person name="Hawkins T."/>
            <person name="Haydu L."/>
            <person name="Ho I."/>
            <person name="Huang W."/>
            <person name="Israni S."/>
            <person name="Jett J."/>
            <person name="Kadner K."/>
            <person name="Kimball H."/>
            <person name="Kobayashi A."/>
            <person name="Larionov V."/>
            <person name="Leem S.-H."/>
            <person name="Lopez F."/>
            <person name="Lou Y."/>
            <person name="Lowry S."/>
            <person name="Malfatti S."/>
            <person name="Martinez D."/>
            <person name="McCready P.M."/>
            <person name="Medina C."/>
            <person name="Morgan J."/>
            <person name="Nelson K."/>
            <person name="Nolan M."/>
            <person name="Ovcharenko I."/>
            <person name="Pitluck S."/>
            <person name="Pollard M."/>
            <person name="Popkie A.P."/>
            <person name="Predki P."/>
            <person name="Quan G."/>
            <person name="Ramirez L."/>
            <person name="Rash S."/>
            <person name="Retterer J."/>
            <person name="Rodriguez A."/>
            <person name="Rogers S."/>
            <person name="Salamov A."/>
            <person name="Salazar A."/>
            <person name="She X."/>
            <person name="Smith D."/>
            <person name="Slezak T."/>
            <person name="Solovyev V."/>
            <person name="Thayer N."/>
            <person name="Tice H."/>
            <person name="Tsai M."/>
            <person name="Ustaszewska A."/>
            <person name="Vo N."/>
            <person name="Wagner M."/>
            <person name="Wheeler J."/>
            <person name="Wu K."/>
            <person name="Xie G."/>
            <person name="Yang J."/>
            <person name="Dubchak I."/>
            <person name="Furey T.S."/>
            <person name="DeJong P."/>
            <person name="Dickson M."/>
            <person name="Gordon D."/>
            <person name="Eichler E.E."/>
            <person name="Pennacchio L.A."/>
            <person name="Richardson P."/>
            <person name="Stubbs L."/>
            <person name="Rokhsar D.S."/>
            <person name="Myers R.M."/>
            <person name="Rubin E.M."/>
            <person name="Lucas S.M."/>
        </authorList>
    </citation>
    <scope>NUCLEOTIDE SEQUENCE [LARGE SCALE GENOMIC DNA]</scope>
</reference>
<reference key="4">
    <citation type="journal article" date="2004" name="Genome Res.">
        <title>The status, quality, and expansion of the NIH full-length cDNA project: the Mammalian Gene Collection (MGC).</title>
        <authorList>
            <consortium name="The MGC Project Team"/>
        </authorList>
    </citation>
    <scope>NUCLEOTIDE SEQUENCE [LARGE SCALE MRNA] (ISOFORM 1)</scope>
    <scope>VARIANT THR-359</scope>
    <source>
        <tissue>Testis</tissue>
    </source>
</reference>
<accession>Q7Z398</accession>
<accession>B3KVF6</accession>
<accession>O43337</accession>
<accession>Q7Z6D7</accession>
<accession>Q8NE45</accession>
<evidence type="ECO:0000255" key="1">
    <source>
        <dbReference type="PROSITE-ProRule" id="PRU00042"/>
    </source>
</evidence>
<evidence type="ECO:0000255" key="2">
    <source>
        <dbReference type="PROSITE-ProRule" id="PRU00119"/>
    </source>
</evidence>
<evidence type="ECO:0000256" key="3">
    <source>
        <dbReference type="SAM" id="MobiDB-lite"/>
    </source>
</evidence>
<evidence type="ECO:0000269" key="4">
    <source>
    </source>
</evidence>
<evidence type="ECO:0000269" key="5">
    <source>
    </source>
</evidence>
<evidence type="ECO:0000269" key="6">
    <source>
    </source>
</evidence>
<evidence type="ECO:0000305" key="7"/>
<proteinExistence type="evidence at protein level"/>
<name>ZN550_HUMAN</name>
<dbReference type="EMBL" id="AK122867">
    <property type="protein sequence ID" value="BAG53768.1"/>
    <property type="molecule type" value="mRNA"/>
</dbReference>
<dbReference type="EMBL" id="BX538032">
    <property type="protein sequence ID" value="CAD97977.1"/>
    <property type="molecule type" value="mRNA"/>
</dbReference>
<dbReference type="EMBL" id="AC003682">
    <property type="protein sequence ID" value="AAC24606.1"/>
    <property type="molecule type" value="Genomic_DNA"/>
</dbReference>
<dbReference type="EMBL" id="BC034810">
    <property type="protein sequence ID" value="AAH34810.1"/>
    <property type="status" value="ALT_INIT"/>
    <property type="molecule type" value="mRNA"/>
</dbReference>
<dbReference type="EMBL" id="BC053858">
    <property type="protein sequence ID" value="AAH53858.1"/>
    <property type="status" value="ALT_INIT"/>
    <property type="molecule type" value="mRNA"/>
</dbReference>
<dbReference type="CCDS" id="CCDS35500.2">
    <molecule id="Q7Z398-1"/>
</dbReference>
<dbReference type="RefSeq" id="NP_001264019.1">
    <molecule id="Q7Z398-1"/>
    <property type="nucleotide sequence ID" value="NM_001277090.2"/>
</dbReference>
<dbReference type="RefSeq" id="NP_001264020.1">
    <molecule id="Q7Z398-1"/>
    <property type="nucleotide sequence ID" value="NM_001277091.2"/>
</dbReference>
<dbReference type="RefSeq" id="NP_001264021.1">
    <molecule id="Q7Z398-1"/>
    <property type="nucleotide sequence ID" value="NM_001277092.2"/>
</dbReference>
<dbReference type="RefSeq" id="NP_001264022.1">
    <property type="nucleotide sequence ID" value="NM_001277093.1"/>
</dbReference>
<dbReference type="RefSeq" id="NP_001384301.1">
    <molecule id="Q7Z398-1"/>
    <property type="nucleotide sequence ID" value="NM_001397372.1"/>
</dbReference>
<dbReference type="RefSeq" id="XP_011524869.1">
    <property type="nucleotide sequence ID" value="XM_011526567.2"/>
</dbReference>
<dbReference type="RefSeq" id="XP_011524870.1">
    <property type="nucleotide sequence ID" value="XM_011526568.2"/>
</dbReference>
<dbReference type="RefSeq" id="XP_016881890.1">
    <property type="nucleotide sequence ID" value="XM_017026401.1"/>
</dbReference>
<dbReference type="SMR" id="Q7Z398"/>
<dbReference type="BioGRID" id="127836">
    <property type="interactions" value="66"/>
</dbReference>
<dbReference type="FunCoup" id="Q7Z398">
    <property type="interactions" value="33"/>
</dbReference>
<dbReference type="IntAct" id="Q7Z398">
    <property type="interactions" value="64"/>
</dbReference>
<dbReference type="STRING" id="9606.ENSP00000446224"/>
<dbReference type="iPTMnet" id="Q7Z398"/>
<dbReference type="PhosphoSitePlus" id="Q7Z398"/>
<dbReference type="BioMuta" id="ZNF550"/>
<dbReference type="DMDM" id="97219074"/>
<dbReference type="jPOST" id="Q7Z398"/>
<dbReference type="MassIVE" id="Q7Z398"/>
<dbReference type="PaxDb" id="9606-ENSP00000446224"/>
<dbReference type="PeptideAtlas" id="Q7Z398"/>
<dbReference type="ProteomicsDB" id="69017">
    <molecule id="Q7Z398-1"/>
</dbReference>
<dbReference type="ProteomicsDB" id="69018">
    <molecule id="Q7Z398-2"/>
</dbReference>
<dbReference type="Antibodypedia" id="47752">
    <property type="antibodies" value="122 antibodies from 19 providers"/>
</dbReference>
<dbReference type="DNASU" id="162972"/>
<dbReference type="Ensembl" id="ENST00000376230.7">
    <molecule id="Q7Z398-1"/>
    <property type="protein sequence ID" value="ENSP00000469537.1"/>
    <property type="gene ID" value="ENSG00000251369.10"/>
</dbReference>
<dbReference type="Ensembl" id="ENST00000447310.5">
    <molecule id="Q7Z398-1"/>
    <property type="protein sequence ID" value="ENSP00000469580.1"/>
    <property type="gene ID" value="ENSG00000251369.10"/>
</dbReference>
<dbReference type="Ensembl" id="ENST00000457177.5">
    <molecule id="Q7Z398-1"/>
    <property type="protein sequence ID" value="ENSP00000469679.1"/>
    <property type="gene ID" value="ENSG00000251369.10"/>
</dbReference>
<dbReference type="Ensembl" id="ENST00000699333.1">
    <molecule id="Q7Z398-1"/>
    <property type="protein sequence ID" value="ENSP00000514306.1"/>
    <property type="gene ID" value="ENSG00000251369.10"/>
</dbReference>
<dbReference type="GeneID" id="162972"/>
<dbReference type="KEGG" id="hsa:162972"/>
<dbReference type="MANE-Select" id="ENST00000699333.1">
    <property type="protein sequence ID" value="ENSP00000514306.1"/>
    <property type="RefSeq nucleotide sequence ID" value="NM_001397372.1"/>
    <property type="RefSeq protein sequence ID" value="NP_001384301.1"/>
</dbReference>
<dbReference type="UCSC" id="uc002qpc.5">
    <molecule id="Q7Z398-1"/>
    <property type="organism name" value="human"/>
</dbReference>
<dbReference type="AGR" id="HGNC:28643"/>
<dbReference type="CTD" id="162972"/>
<dbReference type="GeneCards" id="ZNF550"/>
<dbReference type="HGNC" id="HGNC:28643">
    <property type="gene designation" value="ZNF550"/>
</dbReference>
<dbReference type="neXtProt" id="NX_Q7Z398"/>
<dbReference type="OpenTargets" id="ENSG00000251369"/>
<dbReference type="PharmGKB" id="PA134937679"/>
<dbReference type="VEuPathDB" id="HostDB:ENSG00000251369"/>
<dbReference type="eggNOG" id="KOG1721">
    <property type="taxonomic scope" value="Eukaryota"/>
</dbReference>
<dbReference type="GeneTree" id="ENSGT00940000163313"/>
<dbReference type="HOGENOM" id="CLU_002678_0_9_1"/>
<dbReference type="InParanoid" id="Q7Z398"/>
<dbReference type="OMA" id="LIQHYVV"/>
<dbReference type="OrthoDB" id="6077919at2759"/>
<dbReference type="PAN-GO" id="Q7Z398">
    <property type="GO annotations" value="3 GO annotations based on evolutionary models"/>
</dbReference>
<dbReference type="PhylomeDB" id="Q7Z398"/>
<dbReference type="PathwayCommons" id="Q7Z398"/>
<dbReference type="Reactome" id="R-HSA-212436">
    <property type="pathway name" value="Generic Transcription Pathway"/>
</dbReference>
<dbReference type="SignaLink" id="Q7Z398"/>
<dbReference type="BioGRID-ORCS" id="162972">
    <property type="hits" value="10 hits in 1179 CRISPR screens"/>
</dbReference>
<dbReference type="ChiTaRS" id="ZNF550">
    <property type="organism name" value="human"/>
</dbReference>
<dbReference type="GenomeRNAi" id="162972"/>
<dbReference type="Pharos" id="Q7Z398">
    <property type="development level" value="Tdark"/>
</dbReference>
<dbReference type="PRO" id="PR:Q7Z398"/>
<dbReference type="Proteomes" id="UP000005640">
    <property type="component" value="Chromosome 19"/>
</dbReference>
<dbReference type="RNAct" id="Q7Z398">
    <property type="molecule type" value="protein"/>
</dbReference>
<dbReference type="Bgee" id="ENSG00000251369">
    <property type="expression patterns" value="Expressed in endothelial cell and 164 other cell types or tissues"/>
</dbReference>
<dbReference type="ExpressionAtlas" id="Q7Z398">
    <property type="expression patterns" value="baseline and differential"/>
</dbReference>
<dbReference type="GO" id="GO:0005634">
    <property type="term" value="C:nucleus"/>
    <property type="evidence" value="ECO:0000318"/>
    <property type="project" value="GO_Central"/>
</dbReference>
<dbReference type="GO" id="GO:0000981">
    <property type="term" value="F:DNA-binding transcription factor activity, RNA polymerase II-specific"/>
    <property type="evidence" value="ECO:0000318"/>
    <property type="project" value="GO_Central"/>
</dbReference>
<dbReference type="GO" id="GO:0000977">
    <property type="term" value="F:RNA polymerase II transcription regulatory region sequence-specific DNA binding"/>
    <property type="evidence" value="ECO:0000318"/>
    <property type="project" value="GO_Central"/>
</dbReference>
<dbReference type="GO" id="GO:0008270">
    <property type="term" value="F:zinc ion binding"/>
    <property type="evidence" value="ECO:0007669"/>
    <property type="project" value="UniProtKB-KW"/>
</dbReference>
<dbReference type="GO" id="GO:0045944">
    <property type="term" value="P:positive regulation of transcription by RNA polymerase II"/>
    <property type="evidence" value="ECO:0007669"/>
    <property type="project" value="UniProtKB-ARBA"/>
</dbReference>
<dbReference type="GO" id="GO:0006357">
    <property type="term" value="P:regulation of transcription by RNA polymerase II"/>
    <property type="evidence" value="ECO:0000318"/>
    <property type="project" value="GO_Central"/>
</dbReference>
<dbReference type="CDD" id="cd07765">
    <property type="entry name" value="KRAB_A-box"/>
    <property type="match status" value="1"/>
</dbReference>
<dbReference type="FunFam" id="3.30.160.60:FF:003795">
    <property type="match status" value="1"/>
</dbReference>
<dbReference type="FunFam" id="3.30.160.60:FF:000198">
    <property type="entry name" value="zinc finger protein 10 isoform X1"/>
    <property type="match status" value="1"/>
</dbReference>
<dbReference type="FunFam" id="3.30.160.60:FF:000352">
    <property type="entry name" value="zinc finger protein 3 homolog"/>
    <property type="match status" value="1"/>
</dbReference>
<dbReference type="FunFam" id="3.30.160.60:FF:002343">
    <property type="entry name" value="Zinc finger protein 33A"/>
    <property type="match status" value="1"/>
</dbReference>
<dbReference type="FunFam" id="3.30.160.60:FF:001498">
    <property type="entry name" value="Zinc finger protein 404"/>
    <property type="match status" value="1"/>
</dbReference>
<dbReference type="FunFam" id="3.30.160.60:FF:002254">
    <property type="entry name" value="Zinc finger protein 540"/>
    <property type="match status" value="1"/>
</dbReference>
<dbReference type="FunFam" id="3.30.160.60:FF:000384">
    <property type="entry name" value="Zinc finger protein 550"/>
    <property type="match status" value="2"/>
</dbReference>
<dbReference type="Gene3D" id="6.10.140.140">
    <property type="match status" value="1"/>
</dbReference>
<dbReference type="Gene3D" id="3.30.160.60">
    <property type="entry name" value="Classic Zinc Finger"/>
    <property type="match status" value="8"/>
</dbReference>
<dbReference type="InterPro" id="IPR050329">
    <property type="entry name" value="GLI_C2H2-zinc-finger"/>
</dbReference>
<dbReference type="InterPro" id="IPR001909">
    <property type="entry name" value="KRAB"/>
</dbReference>
<dbReference type="InterPro" id="IPR036051">
    <property type="entry name" value="KRAB_dom_sf"/>
</dbReference>
<dbReference type="InterPro" id="IPR036236">
    <property type="entry name" value="Znf_C2H2_sf"/>
</dbReference>
<dbReference type="InterPro" id="IPR013087">
    <property type="entry name" value="Znf_C2H2_type"/>
</dbReference>
<dbReference type="PANTHER" id="PTHR19818:SF158">
    <property type="entry name" value="C2H2-TYPE DOMAIN-CONTAINING PROTEIN-RELATED"/>
    <property type="match status" value="1"/>
</dbReference>
<dbReference type="PANTHER" id="PTHR19818">
    <property type="entry name" value="ZINC FINGER PROTEIN ZIC AND GLI"/>
    <property type="match status" value="1"/>
</dbReference>
<dbReference type="Pfam" id="PF01352">
    <property type="entry name" value="KRAB"/>
    <property type="match status" value="1"/>
</dbReference>
<dbReference type="Pfam" id="PF00096">
    <property type="entry name" value="zf-C2H2"/>
    <property type="match status" value="7"/>
</dbReference>
<dbReference type="SMART" id="SM00349">
    <property type="entry name" value="KRAB"/>
    <property type="match status" value="1"/>
</dbReference>
<dbReference type="SMART" id="SM00355">
    <property type="entry name" value="ZnF_C2H2"/>
    <property type="match status" value="8"/>
</dbReference>
<dbReference type="SUPFAM" id="SSF57667">
    <property type="entry name" value="beta-beta-alpha zinc fingers"/>
    <property type="match status" value="5"/>
</dbReference>
<dbReference type="SUPFAM" id="SSF109640">
    <property type="entry name" value="KRAB domain (Kruppel-associated box)"/>
    <property type="match status" value="1"/>
</dbReference>
<dbReference type="PROSITE" id="PS50805">
    <property type="entry name" value="KRAB"/>
    <property type="match status" value="1"/>
</dbReference>
<dbReference type="PROSITE" id="PS00028">
    <property type="entry name" value="ZINC_FINGER_C2H2_1"/>
    <property type="match status" value="8"/>
</dbReference>
<dbReference type="PROSITE" id="PS50157">
    <property type="entry name" value="ZINC_FINGER_C2H2_2"/>
    <property type="match status" value="8"/>
</dbReference>
<feature type="chain" id="PRO_0000234585" description="Zinc finger protein 550">
    <location>
        <begin position="1"/>
        <end position="422"/>
    </location>
</feature>
<feature type="domain" description="KRAB" evidence="2">
    <location>
        <begin position="12"/>
        <end position="83"/>
    </location>
</feature>
<feature type="zinc finger region" description="C2H2-type 1" evidence="1">
    <location>
        <begin position="203"/>
        <end position="225"/>
    </location>
</feature>
<feature type="zinc finger region" description="C2H2-type 2" evidence="1">
    <location>
        <begin position="231"/>
        <end position="253"/>
    </location>
</feature>
<feature type="zinc finger region" description="C2H2-type 3" evidence="1">
    <location>
        <begin position="259"/>
        <end position="281"/>
    </location>
</feature>
<feature type="zinc finger region" description="C2H2-type 4" evidence="1">
    <location>
        <begin position="287"/>
        <end position="309"/>
    </location>
</feature>
<feature type="zinc finger region" description="C2H2-type 5" evidence="1">
    <location>
        <begin position="315"/>
        <end position="337"/>
    </location>
</feature>
<feature type="zinc finger region" description="C2H2-type 6" evidence="1">
    <location>
        <begin position="343"/>
        <end position="365"/>
    </location>
</feature>
<feature type="zinc finger region" description="C2H2-type 7" evidence="1">
    <location>
        <begin position="371"/>
        <end position="393"/>
    </location>
</feature>
<feature type="zinc finger region" description="C2H2-type 8" evidence="1">
    <location>
        <begin position="399"/>
        <end position="421"/>
    </location>
</feature>
<feature type="region of interest" description="Disordered" evidence="3">
    <location>
        <begin position="113"/>
        <end position="158"/>
    </location>
</feature>
<feature type="compositionally biased region" description="Basic and acidic residues" evidence="3">
    <location>
        <begin position="122"/>
        <end position="152"/>
    </location>
</feature>
<feature type="splice variant" id="VSP_018380" description="In isoform 2." evidence="7">
    <location>
        <begin position="53"/>
        <end position="84"/>
    </location>
</feature>
<feature type="sequence variant" id="VAR_026294" description="In dbSNP:rs1548476." evidence="4 5 6">
    <original>I</original>
    <variation>T</variation>
    <location>
        <position position="359"/>
    </location>
</feature>
<feature type="sequence conflict" description="In Ref. 4; AAH34810." evidence="7" ref="4">
    <original>H</original>
    <variation>R</variation>
    <location>
        <position position="329"/>
    </location>
</feature>
<sequence>MAETKDAAQMLVTFKDVAVTFTREEWRQLDLAQRTLYREVMLETCGLLVSLGHRVPKPELVHLLEHGQELWIVKRGLSHATCAGDRAQVHTREPTTYPPVLSERAFLRGSLTLESSTSSDSRLGRARDEEGLLEMQKGKVTPETDLHKETHLGKVSLEGEGLGTDDGLHSRALQEWLSADVLHECDSQQPGKDALIHAGTNPYKCKQCGKGFNRKWYLVRHQRVHTGMKPYECNACGKAFSQSSTLIRHYLIHTGEKPYKCLECGKAFKRRSYLMQHHPIHTGEKPYECSQCRKAFTHRSTFIRHNRTHTGEKPFECKECEKAFSNRAHLIQHYIIHTGEKPYDCMACGKAFRCSSELIQHQRIHTGEKPYECTQCGKAFHRSTYLIQHSVIHTGEMPYKCIECGKAFKRRSHLLQHQRVHT</sequence>
<protein>
    <recommendedName>
        <fullName>Zinc finger protein 550</fullName>
    </recommendedName>
</protein>
<organism>
    <name type="scientific">Homo sapiens</name>
    <name type="common">Human</name>
    <dbReference type="NCBI Taxonomy" id="9606"/>
    <lineage>
        <taxon>Eukaryota</taxon>
        <taxon>Metazoa</taxon>
        <taxon>Chordata</taxon>
        <taxon>Craniata</taxon>
        <taxon>Vertebrata</taxon>
        <taxon>Euteleostomi</taxon>
        <taxon>Mammalia</taxon>
        <taxon>Eutheria</taxon>
        <taxon>Euarchontoglires</taxon>
        <taxon>Primates</taxon>
        <taxon>Haplorrhini</taxon>
        <taxon>Catarrhini</taxon>
        <taxon>Hominidae</taxon>
        <taxon>Homo</taxon>
    </lineage>
</organism>
<comment type="function">
    <text>May be involved in transcriptional regulation.</text>
</comment>
<comment type="interaction">
    <interactant intactId="EBI-10256834">
        <id>Q7Z398</id>
    </interactant>
    <interactant intactId="EBI-307352">
        <id>Q04864</id>
        <label>REL</label>
    </interactant>
    <organismsDiffer>false</organismsDiffer>
    <experiments>3</experiments>
</comment>
<comment type="subcellular location">
    <subcellularLocation>
        <location evidence="7">Nucleus</location>
    </subcellularLocation>
</comment>
<comment type="alternative products">
    <event type="alternative splicing"/>
    <isoform>
        <id>Q7Z398-1</id>
        <name>1</name>
        <sequence type="displayed"/>
    </isoform>
    <isoform>
        <id>Q7Z398-2</id>
        <name>2</name>
        <sequence type="described" ref="VSP_018380"/>
    </isoform>
</comment>
<comment type="similarity">
    <text evidence="7">Belongs to the krueppel C2H2-type zinc-finger protein family.</text>
</comment>
<comment type="caution">
    <text evidence="7">It is uncertain whether Met-1 or Met-10 is the initiator.</text>
</comment>
<comment type="sequence caution" evidence="7">
    <conflict type="erroneous initiation">
        <sequence resource="EMBL-CDS" id="AAH34810"/>
    </conflict>
    <text>Truncated N-terminus.</text>
</comment>
<comment type="sequence caution" evidence="7">
    <conflict type="erroneous initiation">
        <sequence resource="EMBL-CDS" id="AAH53858"/>
    </conflict>
    <text>Truncated N-terminus.</text>
</comment>
<keyword id="KW-0025">Alternative splicing</keyword>
<keyword id="KW-0238">DNA-binding</keyword>
<keyword id="KW-0479">Metal-binding</keyword>
<keyword id="KW-0539">Nucleus</keyword>
<keyword id="KW-1267">Proteomics identification</keyword>
<keyword id="KW-1185">Reference proteome</keyword>
<keyword id="KW-0677">Repeat</keyword>
<keyword id="KW-0804">Transcription</keyword>
<keyword id="KW-0805">Transcription regulation</keyword>
<keyword id="KW-0862">Zinc</keyword>
<keyword id="KW-0863">Zinc-finger</keyword>
<gene>
    <name type="primary">ZNF550</name>
</gene>